<name>RUVC_BURL3</name>
<proteinExistence type="inferred from homology"/>
<comment type="function">
    <text evidence="1">The RuvA-RuvB-RuvC complex processes Holliday junction (HJ) DNA during genetic recombination and DNA repair. Endonuclease that resolves HJ intermediates. Cleaves cruciform DNA by making single-stranded nicks across the HJ at symmetrical positions within the homologous arms, yielding a 5'-phosphate and a 3'-hydroxyl group; requires a central core of homology in the junction. The consensus cleavage sequence is 5'-(A/T)TT(C/G)-3'. Cleavage occurs on the 3'-side of the TT dinucleotide at the point of strand exchange. HJ branch migration catalyzed by RuvA-RuvB allows RuvC to scan DNA until it finds its consensus sequence, where it cleaves and resolves the cruciform DNA.</text>
</comment>
<comment type="catalytic activity">
    <reaction evidence="1">
        <text>Endonucleolytic cleavage at a junction such as a reciprocal single-stranded crossover between two homologous DNA duplexes (Holliday junction).</text>
        <dbReference type="EC" id="3.1.21.10"/>
    </reaction>
</comment>
<comment type="cofactor">
    <cofactor evidence="1">
        <name>Mg(2+)</name>
        <dbReference type="ChEBI" id="CHEBI:18420"/>
    </cofactor>
    <text evidence="1">Binds 2 Mg(2+) ion per subunit.</text>
</comment>
<comment type="subunit">
    <text evidence="1">Homodimer which binds Holliday junction (HJ) DNA. The HJ becomes 2-fold symmetrical on binding to RuvC with unstacked arms; it has a different conformation from HJ DNA in complex with RuvA. In the full resolvosome a probable DNA-RuvA(4)-RuvB(12)-RuvC(2) complex forms which resolves the HJ.</text>
</comment>
<comment type="subcellular location">
    <subcellularLocation>
        <location evidence="1">Cytoplasm</location>
    </subcellularLocation>
</comment>
<comment type="similarity">
    <text evidence="1">Belongs to the RuvC family.</text>
</comment>
<accession>Q39JI9</accession>
<gene>
    <name evidence="1" type="primary">ruvC</name>
    <name type="ordered locus">Bcep18194_A3776</name>
</gene>
<reference key="1">
    <citation type="submission" date="2005-10" db="EMBL/GenBank/DDBJ databases">
        <title>Complete sequence of chromosome 1 of Burkholderia sp. 383.</title>
        <authorList>
            <consortium name="US DOE Joint Genome Institute"/>
            <person name="Copeland A."/>
            <person name="Lucas S."/>
            <person name="Lapidus A."/>
            <person name="Barry K."/>
            <person name="Detter J.C."/>
            <person name="Glavina T."/>
            <person name="Hammon N."/>
            <person name="Israni S."/>
            <person name="Pitluck S."/>
            <person name="Chain P."/>
            <person name="Malfatti S."/>
            <person name="Shin M."/>
            <person name="Vergez L."/>
            <person name="Schmutz J."/>
            <person name="Larimer F."/>
            <person name="Land M."/>
            <person name="Kyrpides N."/>
            <person name="Lykidis A."/>
            <person name="Richardson P."/>
        </authorList>
    </citation>
    <scope>NUCLEOTIDE SEQUENCE [LARGE SCALE GENOMIC DNA]</scope>
    <source>
        <strain>ATCC 17760 / DSM 23089 / LMG 22485 / NCIMB 9086 / R18194 / 383</strain>
    </source>
</reference>
<feature type="chain" id="PRO_0000225128" description="Crossover junction endodeoxyribonuclease RuvC">
    <location>
        <begin position="1"/>
        <end position="180"/>
    </location>
</feature>
<feature type="active site" evidence="1">
    <location>
        <position position="7"/>
    </location>
</feature>
<feature type="active site" evidence="1">
    <location>
        <position position="66"/>
    </location>
</feature>
<feature type="active site" evidence="1">
    <location>
        <position position="138"/>
    </location>
</feature>
<feature type="binding site" evidence="1">
    <location>
        <position position="7"/>
    </location>
    <ligand>
        <name>Mg(2+)</name>
        <dbReference type="ChEBI" id="CHEBI:18420"/>
        <label>1</label>
    </ligand>
</feature>
<feature type="binding site" evidence="1">
    <location>
        <position position="66"/>
    </location>
    <ligand>
        <name>Mg(2+)</name>
        <dbReference type="ChEBI" id="CHEBI:18420"/>
        <label>2</label>
    </ligand>
</feature>
<feature type="binding site" evidence="1">
    <location>
        <position position="138"/>
    </location>
    <ligand>
        <name>Mg(2+)</name>
        <dbReference type="ChEBI" id="CHEBI:18420"/>
        <label>1</label>
    </ligand>
</feature>
<organism>
    <name type="scientific">Burkholderia lata (strain ATCC 17760 / DSM 23089 / LMG 22485 / NCIMB 9086 / R18194 / 383)</name>
    <dbReference type="NCBI Taxonomy" id="482957"/>
    <lineage>
        <taxon>Bacteria</taxon>
        <taxon>Pseudomonadati</taxon>
        <taxon>Pseudomonadota</taxon>
        <taxon>Betaproteobacteria</taxon>
        <taxon>Burkholderiales</taxon>
        <taxon>Burkholderiaceae</taxon>
        <taxon>Burkholderia</taxon>
        <taxon>Burkholderia cepacia complex</taxon>
    </lineage>
</organism>
<keyword id="KW-0963">Cytoplasm</keyword>
<keyword id="KW-0227">DNA damage</keyword>
<keyword id="KW-0233">DNA recombination</keyword>
<keyword id="KW-0234">DNA repair</keyword>
<keyword id="KW-0238">DNA-binding</keyword>
<keyword id="KW-0255">Endonuclease</keyword>
<keyword id="KW-0378">Hydrolase</keyword>
<keyword id="KW-0460">Magnesium</keyword>
<keyword id="KW-0479">Metal-binding</keyword>
<keyword id="KW-0540">Nuclease</keyword>
<sequence length="180" mass="18605">MRILGIDPGLRVTGFGIIDVSGHRLAYVASGVIRTPTADLATRLGTIFQGVSTIVREHAPDQSAIEKVFVNVNPQSTLLLGQARGAAICGLVAGGLPVAEYTALQLKQAVVGYGRATKTQMQEMVTRLLNLSGQPGSDAADALGMAICHAHGGNTLSTLGGLAPALAKKGLRVRRGRLVG</sequence>
<protein>
    <recommendedName>
        <fullName evidence="1">Crossover junction endodeoxyribonuclease RuvC</fullName>
        <ecNumber evidence="1">3.1.21.10</ecNumber>
    </recommendedName>
    <alternativeName>
        <fullName evidence="1">Holliday junction nuclease RuvC</fullName>
    </alternativeName>
    <alternativeName>
        <fullName evidence="1">Holliday junction resolvase RuvC</fullName>
    </alternativeName>
</protein>
<dbReference type="EC" id="3.1.21.10" evidence="1"/>
<dbReference type="EMBL" id="CP000151">
    <property type="protein sequence ID" value="ABB07377.1"/>
    <property type="molecule type" value="Genomic_DNA"/>
</dbReference>
<dbReference type="RefSeq" id="WP_011350965.1">
    <property type="nucleotide sequence ID" value="NZ_WNDV01000019.1"/>
</dbReference>
<dbReference type="SMR" id="Q39JI9"/>
<dbReference type="GeneID" id="55505465"/>
<dbReference type="KEGG" id="bur:Bcep18194_A3776"/>
<dbReference type="PATRIC" id="fig|482957.22.peg.637"/>
<dbReference type="HOGENOM" id="CLU_091257_2_0_4"/>
<dbReference type="Proteomes" id="UP000002705">
    <property type="component" value="Chromosome 1"/>
</dbReference>
<dbReference type="GO" id="GO:0005737">
    <property type="term" value="C:cytoplasm"/>
    <property type="evidence" value="ECO:0007669"/>
    <property type="project" value="UniProtKB-SubCell"/>
</dbReference>
<dbReference type="GO" id="GO:0048476">
    <property type="term" value="C:Holliday junction resolvase complex"/>
    <property type="evidence" value="ECO:0007669"/>
    <property type="project" value="UniProtKB-UniRule"/>
</dbReference>
<dbReference type="GO" id="GO:0008821">
    <property type="term" value="F:crossover junction DNA endonuclease activity"/>
    <property type="evidence" value="ECO:0007669"/>
    <property type="project" value="UniProtKB-UniRule"/>
</dbReference>
<dbReference type="GO" id="GO:0003677">
    <property type="term" value="F:DNA binding"/>
    <property type="evidence" value="ECO:0007669"/>
    <property type="project" value="UniProtKB-KW"/>
</dbReference>
<dbReference type="GO" id="GO:0000287">
    <property type="term" value="F:magnesium ion binding"/>
    <property type="evidence" value="ECO:0007669"/>
    <property type="project" value="UniProtKB-UniRule"/>
</dbReference>
<dbReference type="GO" id="GO:0006310">
    <property type="term" value="P:DNA recombination"/>
    <property type="evidence" value="ECO:0007669"/>
    <property type="project" value="UniProtKB-UniRule"/>
</dbReference>
<dbReference type="GO" id="GO:0006281">
    <property type="term" value="P:DNA repair"/>
    <property type="evidence" value="ECO:0007669"/>
    <property type="project" value="UniProtKB-UniRule"/>
</dbReference>
<dbReference type="CDD" id="cd16962">
    <property type="entry name" value="RuvC"/>
    <property type="match status" value="1"/>
</dbReference>
<dbReference type="FunFam" id="3.30.420.10:FF:000002">
    <property type="entry name" value="Crossover junction endodeoxyribonuclease RuvC"/>
    <property type="match status" value="1"/>
</dbReference>
<dbReference type="Gene3D" id="3.30.420.10">
    <property type="entry name" value="Ribonuclease H-like superfamily/Ribonuclease H"/>
    <property type="match status" value="1"/>
</dbReference>
<dbReference type="HAMAP" id="MF_00034">
    <property type="entry name" value="RuvC"/>
    <property type="match status" value="1"/>
</dbReference>
<dbReference type="InterPro" id="IPR012337">
    <property type="entry name" value="RNaseH-like_sf"/>
</dbReference>
<dbReference type="InterPro" id="IPR036397">
    <property type="entry name" value="RNaseH_sf"/>
</dbReference>
<dbReference type="InterPro" id="IPR020563">
    <property type="entry name" value="X-over_junc_endoDNase_Mg_BS"/>
</dbReference>
<dbReference type="InterPro" id="IPR002176">
    <property type="entry name" value="X-over_junc_endoDNase_RuvC"/>
</dbReference>
<dbReference type="NCBIfam" id="TIGR00228">
    <property type="entry name" value="ruvC"/>
    <property type="match status" value="1"/>
</dbReference>
<dbReference type="PANTHER" id="PTHR30194">
    <property type="entry name" value="CROSSOVER JUNCTION ENDODEOXYRIBONUCLEASE RUVC"/>
    <property type="match status" value="1"/>
</dbReference>
<dbReference type="PANTHER" id="PTHR30194:SF3">
    <property type="entry name" value="CROSSOVER JUNCTION ENDODEOXYRIBONUCLEASE RUVC"/>
    <property type="match status" value="1"/>
</dbReference>
<dbReference type="Pfam" id="PF02075">
    <property type="entry name" value="RuvC"/>
    <property type="match status" value="1"/>
</dbReference>
<dbReference type="PRINTS" id="PR00696">
    <property type="entry name" value="RSOLVASERUVC"/>
</dbReference>
<dbReference type="SUPFAM" id="SSF53098">
    <property type="entry name" value="Ribonuclease H-like"/>
    <property type="match status" value="1"/>
</dbReference>
<dbReference type="PROSITE" id="PS01321">
    <property type="entry name" value="RUVC"/>
    <property type="match status" value="1"/>
</dbReference>
<evidence type="ECO:0000255" key="1">
    <source>
        <dbReference type="HAMAP-Rule" id="MF_00034"/>
    </source>
</evidence>